<name>SGS3_DROME</name>
<proteinExistence type="evidence at protein level"/>
<protein>
    <recommendedName>
        <fullName evidence="5">Salivary glue protein Sgs-3</fullName>
    </recommendedName>
</protein>
<gene>
    <name evidence="6" type="primary">Sgs3</name>
    <name evidence="6" type="ORF">CG11720</name>
</gene>
<reference key="1">
    <citation type="journal article" date="1983" name="J. Mol. Biol.">
        <title>DNA sequences, gene regulation and modular protein evolution in the Drosophila 68C glue gene cluster.</title>
        <authorList>
            <person name="Garfinkel M.D."/>
            <person name="Pruitt R.E."/>
            <person name="Meyerowitz E.M."/>
        </authorList>
    </citation>
    <scope>NUCLEOTIDE SEQUENCE [GENOMIC DNA]</scope>
</reference>
<reference key="2">
    <citation type="journal article" date="2000" name="Science">
        <title>The genome sequence of Drosophila melanogaster.</title>
        <authorList>
            <person name="Adams M.D."/>
            <person name="Celniker S.E."/>
            <person name="Holt R.A."/>
            <person name="Evans C.A."/>
            <person name="Gocayne J.D."/>
            <person name="Amanatides P.G."/>
            <person name="Scherer S.E."/>
            <person name="Li P.W."/>
            <person name="Hoskins R.A."/>
            <person name="Galle R.F."/>
            <person name="George R.A."/>
            <person name="Lewis S.E."/>
            <person name="Richards S."/>
            <person name="Ashburner M."/>
            <person name="Henderson S.N."/>
            <person name="Sutton G.G."/>
            <person name="Wortman J.R."/>
            <person name="Yandell M.D."/>
            <person name="Zhang Q."/>
            <person name="Chen L.X."/>
            <person name="Brandon R.C."/>
            <person name="Rogers Y.-H.C."/>
            <person name="Blazej R.G."/>
            <person name="Champe M."/>
            <person name="Pfeiffer B.D."/>
            <person name="Wan K.H."/>
            <person name="Doyle C."/>
            <person name="Baxter E.G."/>
            <person name="Helt G."/>
            <person name="Nelson C.R."/>
            <person name="Miklos G.L.G."/>
            <person name="Abril J.F."/>
            <person name="Agbayani A."/>
            <person name="An H.-J."/>
            <person name="Andrews-Pfannkoch C."/>
            <person name="Baldwin D."/>
            <person name="Ballew R.M."/>
            <person name="Basu A."/>
            <person name="Baxendale J."/>
            <person name="Bayraktaroglu L."/>
            <person name="Beasley E.M."/>
            <person name="Beeson K.Y."/>
            <person name="Benos P.V."/>
            <person name="Berman B.P."/>
            <person name="Bhandari D."/>
            <person name="Bolshakov S."/>
            <person name="Borkova D."/>
            <person name="Botchan M.R."/>
            <person name="Bouck J."/>
            <person name="Brokstein P."/>
            <person name="Brottier P."/>
            <person name="Burtis K.C."/>
            <person name="Busam D.A."/>
            <person name="Butler H."/>
            <person name="Cadieu E."/>
            <person name="Center A."/>
            <person name="Chandra I."/>
            <person name="Cherry J.M."/>
            <person name="Cawley S."/>
            <person name="Dahlke C."/>
            <person name="Davenport L.B."/>
            <person name="Davies P."/>
            <person name="de Pablos B."/>
            <person name="Delcher A."/>
            <person name="Deng Z."/>
            <person name="Mays A.D."/>
            <person name="Dew I."/>
            <person name="Dietz S.M."/>
            <person name="Dodson K."/>
            <person name="Doup L.E."/>
            <person name="Downes M."/>
            <person name="Dugan-Rocha S."/>
            <person name="Dunkov B.C."/>
            <person name="Dunn P."/>
            <person name="Durbin K.J."/>
            <person name="Evangelista C.C."/>
            <person name="Ferraz C."/>
            <person name="Ferriera S."/>
            <person name="Fleischmann W."/>
            <person name="Fosler C."/>
            <person name="Gabrielian A.E."/>
            <person name="Garg N.S."/>
            <person name="Gelbart W.M."/>
            <person name="Glasser K."/>
            <person name="Glodek A."/>
            <person name="Gong F."/>
            <person name="Gorrell J.H."/>
            <person name="Gu Z."/>
            <person name="Guan P."/>
            <person name="Harris M."/>
            <person name="Harris N.L."/>
            <person name="Harvey D.A."/>
            <person name="Heiman T.J."/>
            <person name="Hernandez J.R."/>
            <person name="Houck J."/>
            <person name="Hostin D."/>
            <person name="Houston K.A."/>
            <person name="Howland T.J."/>
            <person name="Wei M.-H."/>
            <person name="Ibegwam C."/>
            <person name="Jalali M."/>
            <person name="Kalush F."/>
            <person name="Karpen G.H."/>
            <person name="Ke Z."/>
            <person name="Kennison J.A."/>
            <person name="Ketchum K.A."/>
            <person name="Kimmel B.E."/>
            <person name="Kodira C.D."/>
            <person name="Kraft C.L."/>
            <person name="Kravitz S."/>
            <person name="Kulp D."/>
            <person name="Lai Z."/>
            <person name="Lasko P."/>
            <person name="Lei Y."/>
            <person name="Levitsky A.A."/>
            <person name="Li J.H."/>
            <person name="Li Z."/>
            <person name="Liang Y."/>
            <person name="Lin X."/>
            <person name="Liu X."/>
            <person name="Mattei B."/>
            <person name="McIntosh T.C."/>
            <person name="McLeod M.P."/>
            <person name="McPherson D."/>
            <person name="Merkulov G."/>
            <person name="Milshina N.V."/>
            <person name="Mobarry C."/>
            <person name="Morris J."/>
            <person name="Moshrefi A."/>
            <person name="Mount S.M."/>
            <person name="Moy M."/>
            <person name="Murphy B."/>
            <person name="Murphy L."/>
            <person name="Muzny D.M."/>
            <person name="Nelson D.L."/>
            <person name="Nelson D.R."/>
            <person name="Nelson K.A."/>
            <person name="Nixon K."/>
            <person name="Nusskern D.R."/>
            <person name="Pacleb J.M."/>
            <person name="Palazzolo M."/>
            <person name="Pittman G.S."/>
            <person name="Pan S."/>
            <person name="Pollard J."/>
            <person name="Puri V."/>
            <person name="Reese M.G."/>
            <person name="Reinert K."/>
            <person name="Remington K."/>
            <person name="Saunders R.D.C."/>
            <person name="Scheeler F."/>
            <person name="Shen H."/>
            <person name="Shue B.C."/>
            <person name="Siden-Kiamos I."/>
            <person name="Simpson M."/>
            <person name="Skupski M.P."/>
            <person name="Smith T.J."/>
            <person name="Spier E."/>
            <person name="Spradling A.C."/>
            <person name="Stapleton M."/>
            <person name="Strong R."/>
            <person name="Sun E."/>
            <person name="Svirskas R."/>
            <person name="Tector C."/>
            <person name="Turner R."/>
            <person name="Venter E."/>
            <person name="Wang A.H."/>
            <person name="Wang X."/>
            <person name="Wang Z.-Y."/>
            <person name="Wassarman D.A."/>
            <person name="Weinstock G.M."/>
            <person name="Weissenbach J."/>
            <person name="Williams S.M."/>
            <person name="Woodage T."/>
            <person name="Worley K.C."/>
            <person name="Wu D."/>
            <person name="Yang S."/>
            <person name="Yao Q.A."/>
            <person name="Ye J."/>
            <person name="Yeh R.-F."/>
            <person name="Zaveri J.S."/>
            <person name="Zhan M."/>
            <person name="Zhang G."/>
            <person name="Zhao Q."/>
            <person name="Zheng L."/>
            <person name="Zheng X.H."/>
            <person name="Zhong F.N."/>
            <person name="Zhong W."/>
            <person name="Zhou X."/>
            <person name="Zhu S.C."/>
            <person name="Zhu X."/>
            <person name="Smith H.O."/>
            <person name="Gibbs R.A."/>
            <person name="Myers E.W."/>
            <person name="Rubin G.M."/>
            <person name="Venter J.C."/>
        </authorList>
    </citation>
    <scope>NUCLEOTIDE SEQUENCE [LARGE SCALE GENOMIC DNA]</scope>
    <source>
        <strain>Berkeley</strain>
    </source>
</reference>
<reference key="3">
    <citation type="journal article" date="2002" name="Genome Biol.">
        <title>Annotation of the Drosophila melanogaster euchromatic genome: a systematic review.</title>
        <authorList>
            <person name="Misra S."/>
            <person name="Crosby M.A."/>
            <person name="Mungall C.J."/>
            <person name="Matthews B.B."/>
            <person name="Campbell K.S."/>
            <person name="Hradecky P."/>
            <person name="Huang Y."/>
            <person name="Kaminker J.S."/>
            <person name="Millburn G.H."/>
            <person name="Prochnik S.E."/>
            <person name="Smith C.D."/>
            <person name="Tupy J.L."/>
            <person name="Whitfield E.J."/>
            <person name="Bayraktaroglu L."/>
            <person name="Berman B.P."/>
            <person name="Bettencourt B.R."/>
            <person name="Celniker S.E."/>
            <person name="de Grey A.D.N.J."/>
            <person name="Drysdale R.A."/>
            <person name="Harris N.L."/>
            <person name="Richter J."/>
            <person name="Russo S."/>
            <person name="Schroeder A.J."/>
            <person name="Shu S.Q."/>
            <person name="Stapleton M."/>
            <person name="Yamada C."/>
            <person name="Ashburner M."/>
            <person name="Gelbart W.M."/>
            <person name="Rubin G.M."/>
            <person name="Lewis S.E."/>
        </authorList>
    </citation>
    <scope>GENOME REANNOTATION</scope>
    <source>
        <strain>Berkeley</strain>
    </source>
</reference>
<reference key="4">
    <citation type="journal article" date="1988" name="J. Mol. Biol.">
        <title>Evolution and expression of the Sgs-3 glue gene of Drosophila.</title>
        <authorList>
            <person name="Martin C.H."/>
            <person name="Mayeda C.A."/>
            <person name="Meyerowitz E.M."/>
        </authorList>
    </citation>
    <scope>NUCLEOTIDE SEQUENCE [GENOMIC DNA] OF 1-28</scope>
</reference>
<reference key="5">
    <citation type="journal article" date="1993" name="Development">
        <title>Puffs and PCR: the in vivo dynamics of early gene expression during ecdysone responses in Drosophila.</title>
        <authorList>
            <person name="Huet F."/>
            <person name="Ruiz C."/>
            <person name="Richards G."/>
        </authorList>
    </citation>
    <scope>DEVELOPMENTAL STAGE</scope>
</reference>
<reference key="6">
    <citation type="journal article" date="2018" name="Nat. Commun.">
        <title>A molecular switch orchestrates enzyme specificity and secretory granule morphology.</title>
        <authorList>
            <person name="Ji S."/>
            <person name="Samara N.L."/>
            <person name="Revoredo L."/>
            <person name="Zhang L."/>
            <person name="Tran D.T."/>
            <person name="Muirhead K."/>
            <person name="Tabak L.A."/>
            <person name="Ten Hagen K.G."/>
        </authorList>
    </citation>
    <scope>IDENTIFICATION BY MASS SPECTROMETRY</scope>
    <scope>TISSUE SPECIFICITY</scope>
    <scope>GLYCOSYLATION</scope>
</reference>
<dbReference type="EMBL" id="X01918">
    <property type="protein sequence ID" value="CAA25994.1"/>
    <property type="molecule type" value="Genomic_DNA"/>
</dbReference>
<dbReference type="EMBL" id="AE014296">
    <property type="protein sequence ID" value="AAF50056.1"/>
    <property type="molecule type" value="Genomic_DNA"/>
</dbReference>
<dbReference type="EMBL" id="X78392">
    <property type="protein sequence ID" value="CAA55154.1"/>
    <property type="molecule type" value="Genomic_DNA"/>
</dbReference>
<dbReference type="PIR" id="A03329">
    <property type="entry name" value="GSFF3"/>
</dbReference>
<dbReference type="RefSeq" id="NP_524024.1">
    <property type="nucleotide sequence ID" value="NM_079300.3"/>
</dbReference>
<dbReference type="BioGRID" id="64658">
    <property type="interactions" value="1"/>
</dbReference>
<dbReference type="FunCoup" id="P02840">
    <property type="interactions" value="5"/>
</dbReference>
<dbReference type="STRING" id="7227.FBpp0075827"/>
<dbReference type="PaxDb" id="7227-FBpp0075827"/>
<dbReference type="EnsemblMetazoa" id="FBtr0076096">
    <property type="protein sequence ID" value="FBpp0075827"/>
    <property type="gene ID" value="FBgn0003373"/>
</dbReference>
<dbReference type="GeneID" id="39288"/>
<dbReference type="KEGG" id="dme:Dmel_CG11720"/>
<dbReference type="AGR" id="FB:FBgn0003373"/>
<dbReference type="CTD" id="39288"/>
<dbReference type="FlyBase" id="FBgn0003373">
    <property type="gene designation" value="Sgs3"/>
</dbReference>
<dbReference type="VEuPathDB" id="VectorBase:FBgn0003373"/>
<dbReference type="eggNOG" id="ENOG502TF7P">
    <property type="taxonomic scope" value="Eukaryota"/>
</dbReference>
<dbReference type="HOGENOM" id="CLU_834891_0_0_1"/>
<dbReference type="InParanoid" id="P02840"/>
<dbReference type="OMA" id="MKTTVAC"/>
<dbReference type="OrthoDB" id="7871374at2759"/>
<dbReference type="BioGRID-ORCS" id="39288">
    <property type="hits" value="0 hits in 1 CRISPR screen"/>
</dbReference>
<dbReference type="ChiTaRS" id="Sgs3">
    <property type="organism name" value="fly"/>
</dbReference>
<dbReference type="GenomeRNAi" id="39288"/>
<dbReference type="PRO" id="PR:P02840"/>
<dbReference type="Proteomes" id="UP000000803">
    <property type="component" value="Chromosome 3L"/>
</dbReference>
<dbReference type="Bgee" id="FBgn0003373">
    <property type="expression patterns" value="Expressed in saliva-secreting gland and 9 other cell types or tissues"/>
</dbReference>
<dbReference type="GO" id="GO:0005576">
    <property type="term" value="C:extracellular region"/>
    <property type="evidence" value="ECO:0000314"/>
    <property type="project" value="FlyBase"/>
</dbReference>
<dbReference type="GO" id="GO:0140073">
    <property type="term" value="F:bioadhesive activity"/>
    <property type="evidence" value="ECO:0000269"/>
    <property type="project" value="FlyBase"/>
</dbReference>
<dbReference type="GO" id="GO:0007594">
    <property type="term" value="P:puparial adhesion"/>
    <property type="evidence" value="ECO:0000270"/>
    <property type="project" value="FlyBase"/>
</dbReference>
<dbReference type="PANTHER" id="PTHR21523">
    <property type="match status" value="1"/>
</dbReference>
<dbReference type="PANTHER" id="PTHR21523:SF47">
    <property type="entry name" value="SALIVARY GLUE PROTEIN SGS-3"/>
    <property type="match status" value="1"/>
</dbReference>
<organism>
    <name type="scientific">Drosophila melanogaster</name>
    <name type="common">Fruit fly</name>
    <dbReference type="NCBI Taxonomy" id="7227"/>
    <lineage>
        <taxon>Eukaryota</taxon>
        <taxon>Metazoa</taxon>
        <taxon>Ecdysozoa</taxon>
        <taxon>Arthropoda</taxon>
        <taxon>Hexapoda</taxon>
        <taxon>Insecta</taxon>
        <taxon>Pterygota</taxon>
        <taxon>Neoptera</taxon>
        <taxon>Endopterygota</taxon>
        <taxon>Diptera</taxon>
        <taxon>Brachycera</taxon>
        <taxon>Muscomorpha</taxon>
        <taxon>Ephydroidea</taxon>
        <taxon>Drosophilidae</taxon>
        <taxon>Drosophila</taxon>
        <taxon>Sophophora</taxon>
    </lineage>
</organism>
<sequence>MKLTIATALASILLIGSANVANCCDCGCPTTTTTCAPRTTQPPCTTTTTTTTTTCAPPTQQSTTQPPCTTSKPTTPKQTTTQLPCTTPTTTKATTTKPTTTKATTTKATTTKPTTTKQTTTQLPCTTPTTTKQTTTQLPCTTPTTTKPTTTKPTTTKPTTTKPTTTKPTTTKPTTTKPTTTKPTTTKPTTTKPTTTKPTTTKPTTTKPTTTKPTTTKPTTTKPTTTKPTTTKPTTTKPTTTKPTTTKPTTTKPTTPKPCGCKSCGPGGEPCNGCAKRDALCQDLNGVLRNLERKIRQCVCGEPQWLL</sequence>
<comment type="subcellular location">
    <subcellularLocation>
        <location>Secreted</location>
    </subcellularLocation>
</comment>
<comment type="tissue specificity">
    <text evidence="3">Specifically expressed in the salivary gland.</text>
</comment>
<comment type="developmental stage">
    <text evidence="4">In the salivary glands of mid instar larvae levels dramatically increase during puff stage 1 at 98-106 hours of development. Levels remain constant and abundant in late larvae until puff stage 10, then decrease by stage 11.</text>
</comment>
<comment type="PTM">
    <text evidence="3">O-glycosylated by Pgnat9 in salivary glands.</text>
</comment>
<feature type="signal peptide" evidence="1">
    <location>
        <begin position="1"/>
        <end position="23"/>
    </location>
</feature>
<feature type="chain" id="PRO_0000022329" description="Salivary glue protein Sgs-3">
    <location>
        <begin position="24"/>
        <end position="307"/>
    </location>
</feature>
<feature type="region of interest" description="Disordered" evidence="2">
    <location>
        <begin position="56"/>
        <end position="257"/>
    </location>
</feature>
<keyword id="KW-0325">Glycoprotein</keyword>
<keyword id="KW-1185">Reference proteome</keyword>
<keyword id="KW-0677">Repeat</keyword>
<keyword id="KW-0964">Secreted</keyword>
<keyword id="KW-0732">Signal</keyword>
<evidence type="ECO:0000255" key="1"/>
<evidence type="ECO:0000256" key="2">
    <source>
        <dbReference type="SAM" id="MobiDB-lite"/>
    </source>
</evidence>
<evidence type="ECO:0000269" key="3">
    <source>
    </source>
</evidence>
<evidence type="ECO:0000269" key="4">
    <source>
    </source>
</evidence>
<evidence type="ECO:0000305" key="5"/>
<evidence type="ECO:0000312" key="6">
    <source>
        <dbReference type="FlyBase" id="FBgn0003373"/>
    </source>
</evidence>
<accession>P02840</accession>
<accession>Q9VTJ2</accession>